<accession>Q4WN42</accession>
<keyword id="KW-0489">Methyltransferase</keyword>
<keyword id="KW-0506">mRNA capping</keyword>
<keyword id="KW-0507">mRNA processing</keyword>
<keyword id="KW-0539">Nucleus</keyword>
<keyword id="KW-1185">Reference proteome</keyword>
<keyword id="KW-0694">RNA-binding</keyword>
<keyword id="KW-0949">S-adenosyl-L-methionine</keyword>
<keyword id="KW-0808">Transferase</keyword>
<name>MCES_ASPFU</name>
<proteinExistence type="inferred from homology"/>
<comment type="function">
    <text evidence="1">Responsible for methylating the 5'-cap structure of mRNAs.</text>
</comment>
<comment type="catalytic activity">
    <reaction evidence="2 3">
        <text>a 5'-end (5'-triphosphoguanosine)-ribonucleoside in mRNA + S-adenosyl-L-methionine = a 5'-end (N(7)-methyl 5'-triphosphoguanosine)-ribonucleoside in mRNA + S-adenosyl-L-homocysteine</text>
        <dbReference type="Rhea" id="RHEA:67008"/>
        <dbReference type="Rhea" id="RHEA-COMP:17166"/>
        <dbReference type="Rhea" id="RHEA-COMP:17167"/>
        <dbReference type="ChEBI" id="CHEBI:57856"/>
        <dbReference type="ChEBI" id="CHEBI:59789"/>
        <dbReference type="ChEBI" id="CHEBI:156461"/>
        <dbReference type="ChEBI" id="CHEBI:167617"/>
        <dbReference type="EC" id="2.1.1.56"/>
    </reaction>
</comment>
<comment type="subcellular location">
    <subcellularLocation>
        <location evidence="1">Nucleus</location>
    </subcellularLocation>
</comment>
<comment type="similarity">
    <text evidence="3">Belongs to the class I-like SAM-binding methyltransferase superfamily. mRNA cap 0 methyltransferase family.</text>
</comment>
<evidence type="ECO:0000250" key="1"/>
<evidence type="ECO:0000250" key="2">
    <source>
        <dbReference type="UniProtKB" id="O43148"/>
    </source>
</evidence>
<evidence type="ECO:0000255" key="3">
    <source>
        <dbReference type="PROSITE-ProRule" id="PRU00895"/>
    </source>
</evidence>
<evidence type="ECO:0000256" key="4">
    <source>
        <dbReference type="SAM" id="MobiDB-lite"/>
    </source>
</evidence>
<organism>
    <name type="scientific">Aspergillus fumigatus (strain ATCC MYA-4609 / CBS 101355 / FGSC A1100 / Af293)</name>
    <name type="common">Neosartorya fumigata</name>
    <dbReference type="NCBI Taxonomy" id="330879"/>
    <lineage>
        <taxon>Eukaryota</taxon>
        <taxon>Fungi</taxon>
        <taxon>Dikarya</taxon>
        <taxon>Ascomycota</taxon>
        <taxon>Pezizomycotina</taxon>
        <taxon>Eurotiomycetes</taxon>
        <taxon>Eurotiomycetidae</taxon>
        <taxon>Eurotiales</taxon>
        <taxon>Aspergillaceae</taxon>
        <taxon>Aspergillus</taxon>
        <taxon>Aspergillus subgen. Fumigati</taxon>
    </lineage>
</organism>
<sequence length="668" mass="74939">MYDPARDSWEERDGDEARSCRGRLASDQPHAVFSPPEQIHGASGENNNTTDLQQHPDPSSKTTASAEVLYAESQPAQPTTQTPPSVSTRIQSPVDPAAQKASNPQSLTSTAQNQLNKSNTTMENTSGSATPKPRADPSDKPNRPVQVASPTDQNGSQGDKKRKLPAEENASEKSQPAPDRPVSKRKRMEERHQKLRKRGRTPPSAYSRRDAEETSSAADRNGPTYRSTSPLPPPRSPTPEDQPRQRKRPGGGARMGLVDRETLRRRQEERERAQVEEAMRASQSRGVADVVRQHYNAVPQRGREWRKTESKIKGLRSFNNWVKSTLIQKFSPDEEFLARFNGTKEWAEDGGVPPVEEKRLLVVDLGCGKGGDLGKWQLAPQPVDLYVGLDPAEVSIVQARERYNGMKSGRGNRGRRNPIFHAEFRPKDCFGEWLGDVDIVQQVGIDPNVGPGGSVMSSRWGGGGFDVVASMFTIHYAFESEEKARQMLRNVAGCLKKGGRFLGVCPNSDVISARVSEINAKKKARQAQAKKEKSDEAPEDGEVEEDDGKVEWGNQIYRVRFPITPPEDGVFRPPFGWKYSYFMEEAVEEVPEYVVPWEAFRALTEDYNLELQYRKPFLDIWRDEKDDPELGPLSERMGVRDRVTGKLLMTEEEKEAASFYHAFCFYKV</sequence>
<feature type="chain" id="PRO_0000303902" description="mRNA cap guanine-N(7) methyltransferase">
    <location>
        <begin position="1"/>
        <end position="668"/>
    </location>
</feature>
<feature type="domain" description="mRNA cap 0 methyltransferase" evidence="3">
    <location>
        <begin position="310"/>
        <end position="668"/>
    </location>
</feature>
<feature type="region of interest" description="Disordered" evidence="4">
    <location>
        <begin position="1"/>
        <end position="281"/>
    </location>
</feature>
<feature type="region of interest" description="Disordered" evidence="4">
    <location>
        <begin position="524"/>
        <end position="547"/>
    </location>
</feature>
<feature type="compositionally biased region" description="Basic and acidic residues" evidence="4">
    <location>
        <begin position="1"/>
        <end position="19"/>
    </location>
</feature>
<feature type="compositionally biased region" description="Polar residues" evidence="4">
    <location>
        <begin position="44"/>
        <end position="65"/>
    </location>
</feature>
<feature type="compositionally biased region" description="Low complexity" evidence="4">
    <location>
        <begin position="73"/>
        <end position="88"/>
    </location>
</feature>
<feature type="compositionally biased region" description="Polar residues" evidence="4">
    <location>
        <begin position="100"/>
        <end position="129"/>
    </location>
</feature>
<feature type="compositionally biased region" description="Basic and acidic residues" evidence="4">
    <location>
        <begin position="133"/>
        <end position="142"/>
    </location>
</feature>
<feature type="compositionally biased region" description="Polar residues" evidence="4">
    <location>
        <begin position="148"/>
        <end position="157"/>
    </location>
</feature>
<feature type="compositionally biased region" description="Basic and acidic residues" evidence="4">
    <location>
        <begin position="257"/>
        <end position="279"/>
    </location>
</feature>
<feature type="compositionally biased region" description="Acidic residues" evidence="4">
    <location>
        <begin position="537"/>
        <end position="547"/>
    </location>
</feature>
<feature type="binding site" evidence="3">
    <location>
        <begin position="319"/>
        <end position="320"/>
    </location>
    <ligand>
        <name>mRNA</name>
        <dbReference type="ChEBI" id="CHEBI:33699"/>
    </ligand>
    <ligandPart>
        <name>mRNA cap</name>
    </ligandPart>
</feature>
<feature type="binding site" evidence="3">
    <location>
        <position position="323"/>
    </location>
    <ligand>
        <name>S-adenosyl-L-methionine</name>
        <dbReference type="ChEBI" id="CHEBI:59789"/>
    </ligand>
</feature>
<feature type="binding site" evidence="3">
    <location>
        <position position="366"/>
    </location>
    <ligand>
        <name>S-adenosyl-L-methionine</name>
        <dbReference type="ChEBI" id="CHEBI:59789"/>
    </ligand>
</feature>
<feature type="binding site" evidence="3">
    <location>
        <position position="390"/>
    </location>
    <ligand>
        <name>S-adenosyl-L-methionine</name>
        <dbReference type="ChEBI" id="CHEBI:59789"/>
    </ligand>
</feature>
<feature type="binding site" evidence="2">
    <location>
        <position position="428"/>
    </location>
    <ligand>
        <name>S-adenosyl-L-methionine</name>
        <dbReference type="ChEBI" id="CHEBI:59789"/>
    </ligand>
</feature>
<feature type="binding site" evidence="3">
    <location>
        <begin position="471"/>
        <end position="473"/>
    </location>
    <ligand>
        <name>S-adenosyl-L-methionine</name>
        <dbReference type="ChEBI" id="CHEBI:59789"/>
    </ligand>
</feature>
<feature type="binding site" evidence="2">
    <location>
        <position position="476"/>
    </location>
    <ligand>
        <name>S-adenosyl-L-methionine</name>
        <dbReference type="ChEBI" id="CHEBI:59789"/>
    </ligand>
</feature>
<feature type="site" description="mRNA cap binding" evidence="3">
    <location>
        <position position="369"/>
    </location>
</feature>
<feature type="site" description="mRNA cap binding" evidence="3">
    <location>
        <position position="375"/>
    </location>
</feature>
<feature type="site" description="mRNA cap binding" evidence="3">
    <location>
        <position position="402"/>
    </location>
</feature>
<feature type="site" description="mRNA cap binding" evidence="3">
    <location>
        <position position="475"/>
    </location>
</feature>
<feature type="site" description="mRNA cap binding" evidence="3">
    <location>
        <position position="592"/>
    </location>
</feature>
<feature type="site" description="mRNA cap binding" evidence="3">
    <location>
        <position position="660"/>
    </location>
</feature>
<protein>
    <recommendedName>
        <fullName>mRNA cap guanine-N(7) methyltransferase</fullName>
        <ecNumber evidence="2">2.1.1.56</ecNumber>
    </recommendedName>
    <alternativeName>
        <fullName>mRNA (guanine-N(7))-methyltransferase</fullName>
    </alternativeName>
    <alternativeName>
        <fullName>mRNA cap methyltransferase</fullName>
    </alternativeName>
</protein>
<reference key="1">
    <citation type="journal article" date="2005" name="Nature">
        <title>Genomic sequence of the pathogenic and allergenic filamentous fungus Aspergillus fumigatus.</title>
        <authorList>
            <person name="Nierman W.C."/>
            <person name="Pain A."/>
            <person name="Anderson M.J."/>
            <person name="Wortman J.R."/>
            <person name="Kim H.S."/>
            <person name="Arroyo J."/>
            <person name="Berriman M."/>
            <person name="Abe K."/>
            <person name="Archer D.B."/>
            <person name="Bermejo C."/>
            <person name="Bennett J.W."/>
            <person name="Bowyer P."/>
            <person name="Chen D."/>
            <person name="Collins M."/>
            <person name="Coulsen R."/>
            <person name="Davies R."/>
            <person name="Dyer P.S."/>
            <person name="Farman M.L."/>
            <person name="Fedorova N."/>
            <person name="Fedorova N.D."/>
            <person name="Feldblyum T.V."/>
            <person name="Fischer R."/>
            <person name="Fosker N."/>
            <person name="Fraser A."/>
            <person name="Garcia J.L."/>
            <person name="Garcia M.J."/>
            <person name="Goble A."/>
            <person name="Goldman G.H."/>
            <person name="Gomi K."/>
            <person name="Griffith-Jones S."/>
            <person name="Gwilliam R."/>
            <person name="Haas B.J."/>
            <person name="Haas H."/>
            <person name="Harris D.E."/>
            <person name="Horiuchi H."/>
            <person name="Huang J."/>
            <person name="Humphray S."/>
            <person name="Jimenez J."/>
            <person name="Keller N."/>
            <person name="Khouri H."/>
            <person name="Kitamoto K."/>
            <person name="Kobayashi T."/>
            <person name="Konzack S."/>
            <person name="Kulkarni R."/>
            <person name="Kumagai T."/>
            <person name="Lafton A."/>
            <person name="Latge J.-P."/>
            <person name="Li W."/>
            <person name="Lord A."/>
            <person name="Lu C."/>
            <person name="Majoros W.H."/>
            <person name="May G.S."/>
            <person name="Miller B.L."/>
            <person name="Mohamoud Y."/>
            <person name="Molina M."/>
            <person name="Monod M."/>
            <person name="Mouyna I."/>
            <person name="Mulligan S."/>
            <person name="Murphy L.D."/>
            <person name="O'Neil S."/>
            <person name="Paulsen I."/>
            <person name="Penalva M.A."/>
            <person name="Pertea M."/>
            <person name="Price C."/>
            <person name="Pritchard B.L."/>
            <person name="Quail M.A."/>
            <person name="Rabbinowitsch E."/>
            <person name="Rawlins N."/>
            <person name="Rajandream M.A."/>
            <person name="Reichard U."/>
            <person name="Renauld H."/>
            <person name="Robson G.D."/>
            <person name="Rodriguez de Cordoba S."/>
            <person name="Rodriguez-Pena J.M."/>
            <person name="Ronning C.M."/>
            <person name="Rutter S."/>
            <person name="Salzberg S.L."/>
            <person name="Sanchez M."/>
            <person name="Sanchez-Ferrero J.C."/>
            <person name="Saunders D."/>
            <person name="Seeger K."/>
            <person name="Squares R."/>
            <person name="Squares S."/>
            <person name="Takeuchi M."/>
            <person name="Tekaia F."/>
            <person name="Turner G."/>
            <person name="Vazquez de Aldana C.R."/>
            <person name="Weidman J."/>
            <person name="White O."/>
            <person name="Woodward J.R."/>
            <person name="Yu J.-H."/>
            <person name="Fraser C.M."/>
            <person name="Galagan J.E."/>
            <person name="Asai K."/>
            <person name="Machida M."/>
            <person name="Hall N."/>
            <person name="Barrell B.G."/>
            <person name="Denning D.W."/>
        </authorList>
    </citation>
    <scope>NUCLEOTIDE SEQUENCE [LARGE SCALE GENOMIC DNA]</scope>
    <source>
        <strain>ATCC MYA-4609 / CBS 101355 / FGSC A1100 / Af293</strain>
    </source>
</reference>
<gene>
    <name type="primary">abd1</name>
    <name type="ORF">AFUA_6G07690</name>
</gene>
<dbReference type="EC" id="2.1.1.56" evidence="2"/>
<dbReference type="EMBL" id="AAHF01000006">
    <property type="protein sequence ID" value="EAL88622.1"/>
    <property type="molecule type" value="Genomic_DNA"/>
</dbReference>
<dbReference type="RefSeq" id="XP_750660.1">
    <property type="nucleotide sequence ID" value="XM_745567.1"/>
</dbReference>
<dbReference type="SMR" id="Q4WN42"/>
<dbReference type="FunCoup" id="Q4WN42">
    <property type="interactions" value="1017"/>
</dbReference>
<dbReference type="STRING" id="330879.Q4WN42"/>
<dbReference type="EnsemblFungi" id="EAL88622">
    <property type="protein sequence ID" value="EAL88622"/>
    <property type="gene ID" value="AFUA_6G07690"/>
</dbReference>
<dbReference type="GeneID" id="3508761"/>
<dbReference type="KEGG" id="afm:AFUA_6G07690"/>
<dbReference type="VEuPathDB" id="FungiDB:Afu6g07690"/>
<dbReference type="eggNOG" id="KOG1975">
    <property type="taxonomic scope" value="Eukaryota"/>
</dbReference>
<dbReference type="HOGENOM" id="CLU_020346_3_0_1"/>
<dbReference type="InParanoid" id="Q4WN42"/>
<dbReference type="OMA" id="KPFLEVW"/>
<dbReference type="OrthoDB" id="10248867at2759"/>
<dbReference type="Proteomes" id="UP000002530">
    <property type="component" value="Chromosome 6"/>
</dbReference>
<dbReference type="GO" id="GO:0005634">
    <property type="term" value="C:nucleus"/>
    <property type="evidence" value="ECO:0000318"/>
    <property type="project" value="GO_Central"/>
</dbReference>
<dbReference type="GO" id="GO:0004482">
    <property type="term" value="F:mRNA 5'-cap (guanine-N7-)-methyltransferase activity"/>
    <property type="evidence" value="ECO:0000318"/>
    <property type="project" value="GO_Central"/>
</dbReference>
<dbReference type="GO" id="GO:0003723">
    <property type="term" value="F:RNA binding"/>
    <property type="evidence" value="ECO:0007669"/>
    <property type="project" value="UniProtKB-KW"/>
</dbReference>
<dbReference type="GO" id="GO:0006370">
    <property type="term" value="P:7-methylguanosine mRNA capping"/>
    <property type="evidence" value="ECO:0000318"/>
    <property type="project" value="GO_Central"/>
</dbReference>
<dbReference type="FunFam" id="3.40.50.150:FF:000231">
    <property type="entry name" value="mRNA cap guanine-N7 methyltransferase"/>
    <property type="match status" value="1"/>
</dbReference>
<dbReference type="Gene3D" id="3.40.50.150">
    <property type="entry name" value="Vaccinia Virus protein VP39"/>
    <property type="match status" value="1"/>
</dbReference>
<dbReference type="InterPro" id="IPR004971">
    <property type="entry name" value="mRNA_G-N7_MeTrfase_dom"/>
</dbReference>
<dbReference type="InterPro" id="IPR039753">
    <property type="entry name" value="RG7MT1"/>
</dbReference>
<dbReference type="InterPro" id="IPR029063">
    <property type="entry name" value="SAM-dependent_MTases_sf"/>
</dbReference>
<dbReference type="PANTHER" id="PTHR12189:SF2">
    <property type="entry name" value="MRNA CAP GUANINE-N7 METHYLTRANSFERASE"/>
    <property type="match status" value="1"/>
</dbReference>
<dbReference type="PANTHER" id="PTHR12189">
    <property type="entry name" value="MRNA GUANINE-7- METHYLTRANSFERASE"/>
    <property type="match status" value="1"/>
</dbReference>
<dbReference type="Pfam" id="PF03291">
    <property type="entry name" value="mRNA_G-N7_MeTrfase"/>
    <property type="match status" value="1"/>
</dbReference>
<dbReference type="SUPFAM" id="SSF53335">
    <property type="entry name" value="S-adenosyl-L-methionine-dependent methyltransferases"/>
    <property type="match status" value="1"/>
</dbReference>
<dbReference type="PROSITE" id="PS51562">
    <property type="entry name" value="RNA_CAP0_MT"/>
    <property type="match status" value="1"/>
</dbReference>